<comment type="catalytic activity">
    <reaction evidence="1">
        <text>tRNA(His) + L-histidine + ATP = L-histidyl-tRNA(His) + AMP + diphosphate + H(+)</text>
        <dbReference type="Rhea" id="RHEA:17313"/>
        <dbReference type="Rhea" id="RHEA-COMP:9665"/>
        <dbReference type="Rhea" id="RHEA-COMP:9689"/>
        <dbReference type="ChEBI" id="CHEBI:15378"/>
        <dbReference type="ChEBI" id="CHEBI:30616"/>
        <dbReference type="ChEBI" id="CHEBI:33019"/>
        <dbReference type="ChEBI" id="CHEBI:57595"/>
        <dbReference type="ChEBI" id="CHEBI:78442"/>
        <dbReference type="ChEBI" id="CHEBI:78527"/>
        <dbReference type="ChEBI" id="CHEBI:456215"/>
        <dbReference type="EC" id="6.1.1.21"/>
    </reaction>
</comment>
<comment type="subunit">
    <text evidence="1">Homodimer.</text>
</comment>
<comment type="subcellular location">
    <subcellularLocation>
        <location evidence="1">Cytoplasm</location>
    </subcellularLocation>
</comment>
<comment type="similarity">
    <text evidence="1">Belongs to the class-II aminoacyl-tRNA synthetase family.</text>
</comment>
<feature type="chain" id="PRO_1000199152" description="Histidine--tRNA ligase">
    <location>
        <begin position="1"/>
        <end position="428"/>
    </location>
</feature>
<name>SYH_STACT</name>
<reference key="1">
    <citation type="journal article" date="2009" name="Appl. Environ. Microbiol.">
        <title>Genome analysis of the meat starter culture bacterium Staphylococcus carnosus TM300.</title>
        <authorList>
            <person name="Rosenstein R."/>
            <person name="Nerz C."/>
            <person name="Biswas L."/>
            <person name="Resch A."/>
            <person name="Raddatz G."/>
            <person name="Schuster S.C."/>
            <person name="Goetz F."/>
        </authorList>
    </citation>
    <scope>NUCLEOTIDE SEQUENCE [LARGE SCALE GENOMIC DNA]</scope>
    <source>
        <strain>TM300</strain>
    </source>
</reference>
<gene>
    <name evidence="1" type="primary">hisS</name>
    <name type="ordered locus">Sca_1242</name>
</gene>
<dbReference type="EC" id="6.1.1.21" evidence="1"/>
<dbReference type="EMBL" id="AM295250">
    <property type="protein sequence ID" value="CAL28149.1"/>
    <property type="molecule type" value="Genomic_DNA"/>
</dbReference>
<dbReference type="RefSeq" id="WP_015900489.1">
    <property type="nucleotide sequence ID" value="NC_012121.1"/>
</dbReference>
<dbReference type="SMR" id="B9DNF9"/>
<dbReference type="GeneID" id="93793668"/>
<dbReference type="KEGG" id="sca:SCA_1242"/>
<dbReference type="eggNOG" id="COG0124">
    <property type="taxonomic scope" value="Bacteria"/>
</dbReference>
<dbReference type="HOGENOM" id="CLU_025113_1_1_9"/>
<dbReference type="OrthoDB" id="9800814at2"/>
<dbReference type="BioCyc" id="SCAR396513:SCA_RS06210-MONOMER"/>
<dbReference type="Proteomes" id="UP000000444">
    <property type="component" value="Chromosome"/>
</dbReference>
<dbReference type="GO" id="GO:0005737">
    <property type="term" value="C:cytoplasm"/>
    <property type="evidence" value="ECO:0007669"/>
    <property type="project" value="UniProtKB-SubCell"/>
</dbReference>
<dbReference type="GO" id="GO:0005524">
    <property type="term" value="F:ATP binding"/>
    <property type="evidence" value="ECO:0007669"/>
    <property type="project" value="UniProtKB-UniRule"/>
</dbReference>
<dbReference type="GO" id="GO:0140096">
    <property type="term" value="F:catalytic activity, acting on a protein"/>
    <property type="evidence" value="ECO:0007669"/>
    <property type="project" value="UniProtKB-ARBA"/>
</dbReference>
<dbReference type="GO" id="GO:0004821">
    <property type="term" value="F:histidine-tRNA ligase activity"/>
    <property type="evidence" value="ECO:0007669"/>
    <property type="project" value="UniProtKB-UniRule"/>
</dbReference>
<dbReference type="GO" id="GO:0016740">
    <property type="term" value="F:transferase activity"/>
    <property type="evidence" value="ECO:0007669"/>
    <property type="project" value="UniProtKB-ARBA"/>
</dbReference>
<dbReference type="GO" id="GO:0006427">
    <property type="term" value="P:histidyl-tRNA aminoacylation"/>
    <property type="evidence" value="ECO:0007669"/>
    <property type="project" value="UniProtKB-UniRule"/>
</dbReference>
<dbReference type="CDD" id="cd00773">
    <property type="entry name" value="HisRS-like_core"/>
    <property type="match status" value="1"/>
</dbReference>
<dbReference type="CDD" id="cd00859">
    <property type="entry name" value="HisRS_anticodon"/>
    <property type="match status" value="1"/>
</dbReference>
<dbReference type="FunFam" id="3.30.930.10:FF:000005">
    <property type="entry name" value="Histidine--tRNA ligase"/>
    <property type="match status" value="1"/>
</dbReference>
<dbReference type="Gene3D" id="3.40.50.800">
    <property type="entry name" value="Anticodon-binding domain"/>
    <property type="match status" value="1"/>
</dbReference>
<dbReference type="Gene3D" id="3.30.930.10">
    <property type="entry name" value="Bira Bifunctional Protein, Domain 2"/>
    <property type="match status" value="1"/>
</dbReference>
<dbReference type="HAMAP" id="MF_00127">
    <property type="entry name" value="His_tRNA_synth"/>
    <property type="match status" value="1"/>
</dbReference>
<dbReference type="InterPro" id="IPR006195">
    <property type="entry name" value="aa-tRNA-synth_II"/>
</dbReference>
<dbReference type="InterPro" id="IPR045864">
    <property type="entry name" value="aa-tRNA-synth_II/BPL/LPL"/>
</dbReference>
<dbReference type="InterPro" id="IPR004154">
    <property type="entry name" value="Anticodon-bd"/>
</dbReference>
<dbReference type="InterPro" id="IPR036621">
    <property type="entry name" value="Anticodon-bd_dom_sf"/>
</dbReference>
<dbReference type="InterPro" id="IPR015807">
    <property type="entry name" value="His-tRNA-ligase"/>
</dbReference>
<dbReference type="InterPro" id="IPR041715">
    <property type="entry name" value="HisRS-like_core"/>
</dbReference>
<dbReference type="InterPro" id="IPR004516">
    <property type="entry name" value="HisRS/HisZ"/>
</dbReference>
<dbReference type="InterPro" id="IPR033656">
    <property type="entry name" value="HisRS_anticodon"/>
</dbReference>
<dbReference type="NCBIfam" id="TIGR00442">
    <property type="entry name" value="hisS"/>
    <property type="match status" value="1"/>
</dbReference>
<dbReference type="PANTHER" id="PTHR43707:SF1">
    <property type="entry name" value="HISTIDINE--TRNA LIGASE, MITOCHONDRIAL-RELATED"/>
    <property type="match status" value="1"/>
</dbReference>
<dbReference type="PANTHER" id="PTHR43707">
    <property type="entry name" value="HISTIDYL-TRNA SYNTHETASE"/>
    <property type="match status" value="1"/>
</dbReference>
<dbReference type="Pfam" id="PF03129">
    <property type="entry name" value="HGTP_anticodon"/>
    <property type="match status" value="1"/>
</dbReference>
<dbReference type="Pfam" id="PF13393">
    <property type="entry name" value="tRNA-synt_His"/>
    <property type="match status" value="1"/>
</dbReference>
<dbReference type="PIRSF" id="PIRSF001549">
    <property type="entry name" value="His-tRNA_synth"/>
    <property type="match status" value="1"/>
</dbReference>
<dbReference type="SUPFAM" id="SSF52954">
    <property type="entry name" value="Class II aaRS ABD-related"/>
    <property type="match status" value="1"/>
</dbReference>
<dbReference type="SUPFAM" id="SSF55681">
    <property type="entry name" value="Class II aaRS and biotin synthetases"/>
    <property type="match status" value="1"/>
</dbReference>
<dbReference type="PROSITE" id="PS50862">
    <property type="entry name" value="AA_TRNA_LIGASE_II"/>
    <property type="match status" value="1"/>
</dbReference>
<protein>
    <recommendedName>
        <fullName evidence="1">Histidine--tRNA ligase</fullName>
        <ecNumber evidence="1">6.1.1.21</ecNumber>
    </recommendedName>
    <alternativeName>
        <fullName evidence="1">Histidyl-tRNA synthetase</fullName>
        <shortName evidence="1">HisRS</shortName>
    </alternativeName>
</protein>
<organism>
    <name type="scientific">Staphylococcus carnosus (strain TM300)</name>
    <dbReference type="NCBI Taxonomy" id="396513"/>
    <lineage>
        <taxon>Bacteria</taxon>
        <taxon>Bacillati</taxon>
        <taxon>Bacillota</taxon>
        <taxon>Bacilli</taxon>
        <taxon>Bacillales</taxon>
        <taxon>Staphylococcaceae</taxon>
        <taxon>Staphylococcus</taxon>
    </lineage>
</organism>
<proteinExistence type="inferred from homology"/>
<evidence type="ECO:0000255" key="1">
    <source>
        <dbReference type="HAMAP-Rule" id="MF_00127"/>
    </source>
</evidence>
<keyword id="KW-0030">Aminoacyl-tRNA synthetase</keyword>
<keyword id="KW-0067">ATP-binding</keyword>
<keyword id="KW-0963">Cytoplasm</keyword>
<keyword id="KW-0436">Ligase</keyword>
<keyword id="KW-0547">Nucleotide-binding</keyword>
<keyword id="KW-0648">Protein biosynthesis</keyword>
<keyword id="KW-1185">Reference proteome</keyword>
<accession>B9DNF9</accession>
<sequence>MIKIPRGTQDILPDQSRKWRYIEAKLDELMELYNYKEIRTPIFESTDLFARGVGDSTDVVQKEMYTFKDKGDRSITLRPEGTAAVVRSYIENKMQGDPNQPIKLYYNGPMFRYERKQKGRYRQFNQFGVEAIGAQDPSIDAEILAMVMHIYQSFGLKHLKLVINSVGDFDSRKEYNKALIEHFEPVIDTFCNDCQARLYTNPMRILDCKVDRDKEAVKTAPRITDYLNEESKEYFNQVKQYLDDLNIPYVEDPNLVRGLDYYTHTAFELMIDSPDYDGAITTLCGGGRYNGLLELLDGPKQTGIGFALSIERLLLALEEEGIEIEEDEHLDLFIVTMGEKADRYAVNLLNDLRHHGIKADKDYLKRKIKGQMKQANRVGAEYTIVIGEQELEDGNIDIKHMDSGETDSIHLADLVSYFENKKEKQGEK</sequence>